<dbReference type="EMBL" id="AE005674">
    <property type="protein sequence ID" value="AAN44132.2"/>
    <property type="molecule type" value="Genomic_DNA"/>
</dbReference>
<dbReference type="EMBL" id="AE014073">
    <property type="protein sequence ID" value="AAP17956.1"/>
    <property type="molecule type" value="Genomic_DNA"/>
</dbReference>
<dbReference type="RefSeq" id="NP_708425.2">
    <property type="nucleotide sequence ID" value="NC_004337.2"/>
</dbReference>
<dbReference type="RefSeq" id="WP_001295364.1">
    <property type="nucleotide sequence ID" value="NZ_WPGW01000044.1"/>
</dbReference>
<dbReference type="SMR" id="P0AGB9"/>
<dbReference type="STRING" id="198214.SF2635"/>
<dbReference type="PaxDb" id="198214-SF2635"/>
<dbReference type="GeneID" id="1026945"/>
<dbReference type="GeneID" id="93774518"/>
<dbReference type="KEGG" id="sfl:SF2635"/>
<dbReference type="KEGG" id="sfx:S2808"/>
<dbReference type="PATRIC" id="fig|198214.7.peg.3143"/>
<dbReference type="HOGENOM" id="CLU_047691_3_0_6"/>
<dbReference type="Proteomes" id="UP000001006">
    <property type="component" value="Chromosome"/>
</dbReference>
<dbReference type="Proteomes" id="UP000002673">
    <property type="component" value="Chromosome"/>
</dbReference>
<dbReference type="GO" id="GO:0005737">
    <property type="term" value="C:cytoplasm"/>
    <property type="evidence" value="ECO:0007669"/>
    <property type="project" value="UniProtKB-SubCell"/>
</dbReference>
<dbReference type="GO" id="GO:0003677">
    <property type="term" value="F:DNA binding"/>
    <property type="evidence" value="ECO:0007669"/>
    <property type="project" value="UniProtKB-KW"/>
</dbReference>
<dbReference type="GO" id="GO:0016987">
    <property type="term" value="F:sigma factor activity"/>
    <property type="evidence" value="ECO:0007669"/>
    <property type="project" value="UniProtKB-KW"/>
</dbReference>
<dbReference type="GO" id="GO:0006352">
    <property type="term" value="P:DNA-templated transcription initiation"/>
    <property type="evidence" value="ECO:0007669"/>
    <property type="project" value="InterPro"/>
</dbReference>
<dbReference type="CDD" id="cd06171">
    <property type="entry name" value="Sigma70_r4"/>
    <property type="match status" value="1"/>
</dbReference>
<dbReference type="FunFam" id="1.10.10.10:FF:000043">
    <property type="entry name" value="RNA polymerase sigma factor"/>
    <property type="match status" value="1"/>
</dbReference>
<dbReference type="FunFam" id="1.10.1740.10:FF:000001">
    <property type="entry name" value="RNA polymerase sigma factor"/>
    <property type="match status" value="1"/>
</dbReference>
<dbReference type="Gene3D" id="1.10.1740.10">
    <property type="match status" value="1"/>
</dbReference>
<dbReference type="Gene3D" id="1.10.10.10">
    <property type="entry name" value="Winged helix-like DNA-binding domain superfamily/Winged helix DNA-binding domain"/>
    <property type="match status" value="1"/>
</dbReference>
<dbReference type="InterPro" id="IPR039425">
    <property type="entry name" value="RNA_pol_sigma-70-like"/>
</dbReference>
<dbReference type="InterPro" id="IPR014284">
    <property type="entry name" value="RNA_pol_sigma-70_dom"/>
</dbReference>
<dbReference type="InterPro" id="IPR000838">
    <property type="entry name" value="RNA_pol_sigma70_ECF_CS"/>
</dbReference>
<dbReference type="InterPro" id="IPR007627">
    <property type="entry name" value="RNA_pol_sigma70_r2"/>
</dbReference>
<dbReference type="InterPro" id="IPR013249">
    <property type="entry name" value="RNA_pol_sigma70_r4_t2"/>
</dbReference>
<dbReference type="InterPro" id="IPR014286">
    <property type="entry name" value="RNA_pol_sigma70_RpoE"/>
</dbReference>
<dbReference type="InterPro" id="IPR013325">
    <property type="entry name" value="RNA_pol_sigma_r2"/>
</dbReference>
<dbReference type="InterPro" id="IPR013324">
    <property type="entry name" value="RNA_pol_sigma_r3/r4-like"/>
</dbReference>
<dbReference type="InterPro" id="IPR036388">
    <property type="entry name" value="WH-like_DNA-bd_sf"/>
</dbReference>
<dbReference type="NCBIfam" id="TIGR02939">
    <property type="entry name" value="RpoE_Sigma70"/>
    <property type="match status" value="1"/>
</dbReference>
<dbReference type="NCBIfam" id="TIGR02937">
    <property type="entry name" value="sigma70-ECF"/>
    <property type="match status" value="1"/>
</dbReference>
<dbReference type="PANTHER" id="PTHR43133:SF53">
    <property type="entry name" value="ECF RNA POLYMERASE SIGMA-E FACTOR"/>
    <property type="match status" value="1"/>
</dbReference>
<dbReference type="PANTHER" id="PTHR43133">
    <property type="entry name" value="RNA POLYMERASE ECF-TYPE SIGMA FACTO"/>
    <property type="match status" value="1"/>
</dbReference>
<dbReference type="Pfam" id="PF04542">
    <property type="entry name" value="Sigma70_r2"/>
    <property type="match status" value="1"/>
</dbReference>
<dbReference type="Pfam" id="PF08281">
    <property type="entry name" value="Sigma70_r4_2"/>
    <property type="match status" value="1"/>
</dbReference>
<dbReference type="SUPFAM" id="SSF88946">
    <property type="entry name" value="Sigma2 domain of RNA polymerase sigma factors"/>
    <property type="match status" value="1"/>
</dbReference>
<dbReference type="SUPFAM" id="SSF88659">
    <property type="entry name" value="Sigma3 and sigma4 domains of RNA polymerase sigma factors"/>
    <property type="match status" value="1"/>
</dbReference>
<dbReference type="PROSITE" id="PS01063">
    <property type="entry name" value="SIGMA70_ECF"/>
    <property type="match status" value="1"/>
</dbReference>
<organism>
    <name type="scientific">Shigella flexneri</name>
    <dbReference type="NCBI Taxonomy" id="623"/>
    <lineage>
        <taxon>Bacteria</taxon>
        <taxon>Pseudomonadati</taxon>
        <taxon>Pseudomonadota</taxon>
        <taxon>Gammaproteobacteria</taxon>
        <taxon>Enterobacterales</taxon>
        <taxon>Enterobacteriaceae</taxon>
        <taxon>Shigella</taxon>
    </lineage>
</organism>
<feature type="chain" id="PRO_0000094002" description="ECF RNA polymerase sigma-E factor">
    <location>
        <begin position="1"/>
        <end position="191"/>
    </location>
</feature>
<feature type="DNA-binding region" description="H-T-H motif" evidence="1">
    <location>
        <begin position="156"/>
        <end position="175"/>
    </location>
</feature>
<feature type="region of interest" description="Binds RNAP core" evidence="1">
    <location>
        <begin position="1"/>
        <end position="153"/>
    </location>
</feature>
<feature type="region of interest" description="Sigma-70 factor domain-2" evidence="1">
    <location>
        <begin position="25"/>
        <end position="92"/>
    </location>
</feature>
<feature type="region of interest" description="Sigma-70 factor domain-4" evidence="1">
    <location>
        <begin position="129"/>
        <end position="180"/>
    </location>
</feature>
<feature type="short sequence motif" description="Polymerase core binding" evidence="1">
    <location>
        <begin position="48"/>
        <end position="61"/>
    </location>
</feature>
<reference key="1">
    <citation type="journal article" date="2002" name="Nucleic Acids Res.">
        <title>Genome sequence of Shigella flexneri 2a: insights into pathogenicity through comparison with genomes of Escherichia coli K12 and O157.</title>
        <authorList>
            <person name="Jin Q."/>
            <person name="Yuan Z."/>
            <person name="Xu J."/>
            <person name="Wang Y."/>
            <person name="Shen Y."/>
            <person name="Lu W."/>
            <person name="Wang J."/>
            <person name="Liu H."/>
            <person name="Yang J."/>
            <person name="Yang F."/>
            <person name="Zhang X."/>
            <person name="Zhang J."/>
            <person name="Yang G."/>
            <person name="Wu H."/>
            <person name="Qu D."/>
            <person name="Dong J."/>
            <person name="Sun L."/>
            <person name="Xue Y."/>
            <person name="Zhao A."/>
            <person name="Gao Y."/>
            <person name="Zhu J."/>
            <person name="Kan B."/>
            <person name="Ding K."/>
            <person name="Chen S."/>
            <person name="Cheng H."/>
            <person name="Yao Z."/>
            <person name="He B."/>
            <person name="Chen R."/>
            <person name="Ma D."/>
            <person name="Qiang B."/>
            <person name="Wen Y."/>
            <person name="Hou Y."/>
            <person name="Yu J."/>
        </authorList>
    </citation>
    <scope>NUCLEOTIDE SEQUENCE [LARGE SCALE GENOMIC DNA]</scope>
    <source>
        <strain>301 / Serotype 2a</strain>
    </source>
</reference>
<reference key="2">
    <citation type="journal article" date="2003" name="Infect. Immun.">
        <title>Complete genome sequence and comparative genomics of Shigella flexneri serotype 2a strain 2457T.</title>
        <authorList>
            <person name="Wei J."/>
            <person name="Goldberg M.B."/>
            <person name="Burland V."/>
            <person name="Venkatesan M.M."/>
            <person name="Deng W."/>
            <person name="Fournier G."/>
            <person name="Mayhew G.F."/>
            <person name="Plunkett G. III"/>
            <person name="Rose D.J."/>
            <person name="Darling A."/>
            <person name="Mau B."/>
            <person name="Perna N.T."/>
            <person name="Payne S.M."/>
            <person name="Runyen-Janecky L.J."/>
            <person name="Zhou S."/>
            <person name="Schwartz D.C."/>
            <person name="Blattner F.R."/>
        </authorList>
    </citation>
    <scope>NUCLEOTIDE SEQUENCE [LARGE SCALE GENOMIC DNA]</scope>
    <source>
        <strain>ATCC 700930 / 2457T / Serotype 2a</strain>
    </source>
</reference>
<protein>
    <recommendedName>
        <fullName>ECF RNA polymerase sigma-E factor</fullName>
    </recommendedName>
    <alternativeName>
        <fullName>RNA polymerase sigma-E factor</fullName>
    </alternativeName>
    <alternativeName>
        <fullName>Sigma-24</fullName>
    </alternativeName>
</protein>
<gene>
    <name type="primary">rpoE</name>
    <name type="ordered locus">SF2635</name>
    <name type="ordered locus">S2808</name>
</gene>
<sequence>MSEQLTDQVLVERVQKGDQKAFNLLVVRYQHKVASLVSRYVPSGDVPDVVQEAFIKAYRALDSFRGDSAFYTWLYRIAVNTAKNYLVAQGRRPPSSDVDAIEAENFESGGALKEISNPENLMLSEELRQIVFRTIESLPEDLRMAITLRELDGLSYEEIAAIMDCPVGTVRSRIFRAREAIDNKVQPLIRR</sequence>
<evidence type="ECO:0000250" key="1"/>
<evidence type="ECO:0000305" key="2"/>
<proteinExistence type="inferred from homology"/>
<keyword id="KW-0963">Cytoplasm</keyword>
<keyword id="KW-0238">DNA-binding</keyword>
<keyword id="KW-1185">Reference proteome</keyword>
<keyword id="KW-0731">Sigma factor</keyword>
<keyword id="KW-0346">Stress response</keyword>
<keyword id="KW-0804">Transcription</keyword>
<keyword id="KW-0805">Transcription regulation</keyword>
<accession>P0AGB9</accession>
<accession>P34086</accession>
<comment type="function">
    <text evidence="1">Sigma factors are initiation factors that promote the attachment of RNA polymerase (RNAP) to specific initiation sites and are then released. Extracytoplasmic function (ECF) sigma-E controls the envelope stress response, responding to periplasmic protein stress, increased levels of periplasmic lipopolysaccharide (LPS) as well as heat shock and oxidative stress; it controls protein processing in the extracytoplasmic compartment (By similarity).</text>
</comment>
<comment type="activity regulation">
    <text evidence="1">ECF sigma-E is held in an inactive form by its cognate anti-sigma factor (RseA) until released by regulated intramembrane proteolysis (RIP). RIP occurs when an extracytoplasmic signal (periplasmic stress and excess LPS) triggers a concerted proteolytic cascade to transmit information and elicit cellular responses. The anti-sigma factor RseA is an inner membrane protein, binding sigma-E in the cytoplasm and RseB in the periplasm. RseA is first cut extracytoplasmically (site-1 protease, S1P, by DegS), then within the membrane itself (site-2 protease, S2P, by RseP), while cytoplasmic proteases (predominantly ClpX-ClpP) finish degrading the regulatory protein, liberating sigma-E. Degradation of RseA requires 2 signals to activate DegS; an outer membrane protein (OMP) signal activates DegS, while an LPS signal causes release of RseB from RseA, freeing RseA to be cleaved (By similarity).</text>
</comment>
<comment type="subunit">
    <text evidence="1">Interacts transiently with the RNAP catalytic core formed by RpoA, RpoB, RpoC and RpoZ (2 alpha, 1 beta, 1 beta' and 1 omega subunit) to form the RNAP holoenzyme that can initiate transcription. Interacts 1:1 with anti-sigma-E factor RseA which prevents binding to RNAP catalytic core (By similarity).</text>
</comment>
<comment type="subcellular location">
    <subcellularLocation>
        <location evidence="1">Cytoplasm</location>
    </subcellularLocation>
    <text evidence="1">Associates with the inner membrane via RseA.</text>
</comment>
<comment type="domain">
    <text evidence="1">The sigma-70 factor domain-2 mediates sequence-specific interaction with the -10 element in promoter DNA, and plays an important role in melting the double-stranded DNA and the formation of the transcription bubble. The sigma-70 factor domain-2 mediates interaction with the RNA polymerase subunits RpoB and RpoC (By similarity).</text>
</comment>
<comment type="domain">
    <text evidence="1">The sigma-70 factor domain-4 contains a helix-turn-helix (H-T-H) motif that mediates interaction with the -35 element in promoter DNA. The domain also mediates interaction with the RNA polymerase subunit RpoA. Interactions between sigma-70 factor domain-4 and anti-sigma factors prevents interaction of sigma factors with the RNA polymerase catalytic core (By similarity).</text>
</comment>
<comment type="similarity">
    <text evidence="2">Belongs to the sigma-70 factor family. ECF subfamily.</text>
</comment>
<name>RPOE_SHIFL</name>